<comment type="function">
    <text evidence="1">Specifically methylates the N7 position of a guanine in 16S rRNA.</text>
</comment>
<comment type="subcellular location">
    <subcellularLocation>
        <location evidence="1">Cytoplasm</location>
    </subcellularLocation>
</comment>
<comment type="similarity">
    <text evidence="1">Belongs to the methyltransferase superfamily. RNA methyltransferase RsmG family.</text>
</comment>
<protein>
    <recommendedName>
        <fullName evidence="1">Ribosomal RNA small subunit methyltransferase G</fullName>
        <ecNumber evidence="1">2.1.1.-</ecNumber>
    </recommendedName>
    <alternativeName>
        <fullName evidence="1">16S rRNA 7-methylguanosine methyltransferase</fullName>
        <shortName evidence="1">16S rRNA m7G methyltransferase</shortName>
    </alternativeName>
</protein>
<proteinExistence type="inferred from homology"/>
<dbReference type="EC" id="2.1.1.-" evidence="1"/>
<dbReference type="EMBL" id="AM406671">
    <property type="protein sequence ID" value="CAL97703.1"/>
    <property type="molecule type" value="Genomic_DNA"/>
</dbReference>
<dbReference type="RefSeq" id="WP_011835017.1">
    <property type="nucleotide sequence ID" value="NC_009004.1"/>
</dbReference>
<dbReference type="SMR" id="A2RK93"/>
<dbReference type="STRING" id="416870.llmg_1109"/>
<dbReference type="KEGG" id="llm:llmg_1109"/>
<dbReference type="eggNOG" id="COG0357">
    <property type="taxonomic scope" value="Bacteria"/>
</dbReference>
<dbReference type="HOGENOM" id="CLU_065341_0_2_9"/>
<dbReference type="OrthoDB" id="9808773at2"/>
<dbReference type="PhylomeDB" id="A2RK93"/>
<dbReference type="Proteomes" id="UP000000364">
    <property type="component" value="Chromosome"/>
</dbReference>
<dbReference type="GO" id="GO:0005829">
    <property type="term" value="C:cytosol"/>
    <property type="evidence" value="ECO:0007669"/>
    <property type="project" value="TreeGrafter"/>
</dbReference>
<dbReference type="GO" id="GO:0070043">
    <property type="term" value="F:rRNA (guanine-N7-)-methyltransferase activity"/>
    <property type="evidence" value="ECO:0007669"/>
    <property type="project" value="UniProtKB-UniRule"/>
</dbReference>
<dbReference type="CDD" id="cd02440">
    <property type="entry name" value="AdoMet_MTases"/>
    <property type="match status" value="1"/>
</dbReference>
<dbReference type="FunFam" id="3.40.50.150:FF:000041">
    <property type="entry name" value="Ribosomal RNA small subunit methyltransferase G"/>
    <property type="match status" value="1"/>
</dbReference>
<dbReference type="Gene3D" id="3.40.50.150">
    <property type="entry name" value="Vaccinia Virus protein VP39"/>
    <property type="match status" value="1"/>
</dbReference>
<dbReference type="HAMAP" id="MF_00074">
    <property type="entry name" value="16SrRNA_methyltr_G"/>
    <property type="match status" value="1"/>
</dbReference>
<dbReference type="InterPro" id="IPR003682">
    <property type="entry name" value="rRNA_ssu_MeTfrase_G"/>
</dbReference>
<dbReference type="InterPro" id="IPR029063">
    <property type="entry name" value="SAM-dependent_MTases_sf"/>
</dbReference>
<dbReference type="NCBIfam" id="TIGR00138">
    <property type="entry name" value="rsmG_gidB"/>
    <property type="match status" value="1"/>
</dbReference>
<dbReference type="PANTHER" id="PTHR31760">
    <property type="entry name" value="S-ADENOSYL-L-METHIONINE-DEPENDENT METHYLTRANSFERASES SUPERFAMILY PROTEIN"/>
    <property type="match status" value="1"/>
</dbReference>
<dbReference type="PANTHER" id="PTHR31760:SF0">
    <property type="entry name" value="S-ADENOSYL-L-METHIONINE-DEPENDENT METHYLTRANSFERASES SUPERFAMILY PROTEIN"/>
    <property type="match status" value="1"/>
</dbReference>
<dbReference type="Pfam" id="PF02527">
    <property type="entry name" value="GidB"/>
    <property type="match status" value="1"/>
</dbReference>
<dbReference type="PIRSF" id="PIRSF003078">
    <property type="entry name" value="GidB"/>
    <property type="match status" value="1"/>
</dbReference>
<dbReference type="SUPFAM" id="SSF53335">
    <property type="entry name" value="S-adenosyl-L-methionine-dependent methyltransferases"/>
    <property type="match status" value="1"/>
</dbReference>
<sequence>MTPDEFLSALTDFDIKLSDKQIEQFERYFELLVEWNEKINLTAITEKNEVYLKHFYDSVAPILYGLITDQPVSILDIGAGAGFPSLPMKIIFPELEVTIIDSLNKRINFLSLLTEELGLENVTLLHGRAEDFGQDSNYRATFDFVTARAVARLSVLSEFTIPFLKKNGNLLSLKAAQFEEELTDAKKAIAILGGKFIKEIAYELPNGDERHIAVIEKKKETPKKYPRKAGTPAKSPIK</sequence>
<keyword id="KW-0963">Cytoplasm</keyword>
<keyword id="KW-0489">Methyltransferase</keyword>
<keyword id="KW-0698">rRNA processing</keyword>
<keyword id="KW-0949">S-adenosyl-L-methionine</keyword>
<keyword id="KW-0808">Transferase</keyword>
<reference key="1">
    <citation type="journal article" date="2007" name="J. Bacteriol.">
        <title>The complete genome sequence of the lactic acid bacterial paradigm Lactococcus lactis subsp. cremoris MG1363.</title>
        <authorList>
            <person name="Wegmann U."/>
            <person name="O'Connell-Motherway M."/>
            <person name="Zomer A."/>
            <person name="Buist G."/>
            <person name="Shearman C."/>
            <person name="Canchaya C."/>
            <person name="Ventura M."/>
            <person name="Goesmann A."/>
            <person name="Gasson M.J."/>
            <person name="Kuipers O.P."/>
            <person name="van Sinderen D."/>
            <person name="Kok J."/>
        </authorList>
    </citation>
    <scope>NUCLEOTIDE SEQUENCE [LARGE SCALE GENOMIC DNA]</scope>
    <source>
        <strain>MG1363</strain>
    </source>
</reference>
<feature type="chain" id="PRO_1000010161" description="Ribosomal RNA small subunit methyltransferase G">
    <location>
        <begin position="1"/>
        <end position="238"/>
    </location>
</feature>
<feature type="region of interest" description="Disordered" evidence="2">
    <location>
        <begin position="217"/>
        <end position="238"/>
    </location>
</feature>
<feature type="binding site" evidence="1">
    <location>
        <position position="78"/>
    </location>
    <ligand>
        <name>S-adenosyl-L-methionine</name>
        <dbReference type="ChEBI" id="CHEBI:59789"/>
    </ligand>
</feature>
<feature type="binding site" evidence="1">
    <location>
        <position position="83"/>
    </location>
    <ligand>
        <name>S-adenosyl-L-methionine</name>
        <dbReference type="ChEBI" id="CHEBI:59789"/>
    </ligand>
</feature>
<feature type="binding site" evidence="1">
    <location>
        <begin position="129"/>
        <end position="130"/>
    </location>
    <ligand>
        <name>S-adenosyl-L-methionine</name>
        <dbReference type="ChEBI" id="CHEBI:59789"/>
    </ligand>
</feature>
<feature type="binding site" evidence="1">
    <location>
        <position position="148"/>
    </location>
    <ligand>
        <name>S-adenosyl-L-methionine</name>
        <dbReference type="ChEBI" id="CHEBI:59789"/>
    </ligand>
</feature>
<gene>
    <name evidence="1" type="primary">rsmG</name>
    <name type="ordered locus">llmg_1109</name>
</gene>
<name>RSMG_LACLM</name>
<accession>A2RK93</accession>
<organism>
    <name type="scientific">Lactococcus lactis subsp. cremoris (strain MG1363)</name>
    <dbReference type="NCBI Taxonomy" id="416870"/>
    <lineage>
        <taxon>Bacteria</taxon>
        <taxon>Bacillati</taxon>
        <taxon>Bacillota</taxon>
        <taxon>Bacilli</taxon>
        <taxon>Lactobacillales</taxon>
        <taxon>Streptococcaceae</taxon>
        <taxon>Lactococcus</taxon>
        <taxon>Lactococcus cremoris subsp. cremoris</taxon>
    </lineage>
</organism>
<evidence type="ECO:0000255" key="1">
    <source>
        <dbReference type="HAMAP-Rule" id="MF_00074"/>
    </source>
</evidence>
<evidence type="ECO:0000256" key="2">
    <source>
        <dbReference type="SAM" id="MobiDB-lite"/>
    </source>
</evidence>